<name>RIR1_MYCLE</name>
<feature type="chain" id="PRO_0000187220" description="Ribonucleoside-diphosphate reductase subunit alpha">
    <location>
        <begin position="1"/>
        <end position="721"/>
    </location>
</feature>
<feature type="active site" description="Proton acceptor" evidence="1">
    <location>
        <position position="393"/>
    </location>
</feature>
<feature type="active site" description="Cysteine radical intermediate" evidence="1">
    <location>
        <position position="395"/>
    </location>
</feature>
<feature type="active site" description="Proton acceptor" evidence="1">
    <location>
        <position position="397"/>
    </location>
</feature>
<feature type="binding site" evidence="1">
    <location>
        <position position="168"/>
    </location>
    <ligand>
        <name>substrate</name>
    </ligand>
</feature>
<feature type="binding site" evidence="1">
    <location>
        <begin position="184"/>
        <end position="185"/>
    </location>
    <ligand>
        <name>substrate</name>
    </ligand>
</feature>
<feature type="binding site" evidence="1">
    <location>
        <position position="213"/>
    </location>
    <ligand>
        <name>substrate</name>
    </ligand>
</feature>
<feature type="binding site" evidence="1">
    <location>
        <begin position="393"/>
        <end position="397"/>
    </location>
    <ligand>
        <name>substrate</name>
    </ligand>
</feature>
<feature type="binding site" evidence="1">
    <location>
        <begin position="595"/>
        <end position="599"/>
    </location>
    <ligand>
        <name>substrate</name>
    </ligand>
</feature>
<feature type="site" description="Important for hydrogen atom transfer" evidence="1">
    <location>
        <position position="185"/>
    </location>
</feature>
<feature type="site" description="Allosteric effector binding" evidence="1">
    <location>
        <position position="192"/>
    </location>
</feature>
<feature type="site" description="Allosteric effector binding" evidence="1">
    <location>
        <position position="222"/>
    </location>
</feature>
<feature type="site" description="Important for hydrogen atom transfer" evidence="1">
    <location>
        <position position="422"/>
    </location>
</feature>
<feature type="site" description="Important for electron transfer" evidence="1">
    <location>
        <position position="699"/>
    </location>
</feature>
<feature type="site" description="Important for electron transfer" evidence="1">
    <location>
        <position position="700"/>
    </location>
</feature>
<feature type="site" description="Interacts with thioredoxin/glutaredoxin" evidence="1">
    <location>
        <position position="716"/>
    </location>
</feature>
<feature type="site" description="Interacts with thioredoxin/glutaredoxin" evidence="1">
    <location>
        <position position="719"/>
    </location>
</feature>
<feature type="disulfide bond" description="Redox-active" evidence="1">
    <location>
        <begin position="185"/>
        <end position="422"/>
    </location>
</feature>
<keyword id="KW-0021">Allosteric enzyme</keyword>
<keyword id="KW-0067">ATP-binding</keyword>
<keyword id="KW-0215">Deoxyribonucleotide synthesis</keyword>
<keyword id="KW-1015">Disulfide bond</keyword>
<keyword id="KW-0547">Nucleotide-binding</keyword>
<keyword id="KW-0560">Oxidoreductase</keyword>
<keyword id="KW-1185">Reference proteome</keyword>
<comment type="function">
    <text evidence="1">Provides the precursors necessary for DNA synthesis. Catalyzes the biosynthesis of deoxyribonucleotides from the corresponding ribonucleotides (By similarity).</text>
</comment>
<comment type="catalytic activity">
    <reaction>
        <text>a 2'-deoxyribonucleoside 5'-diphosphate + [thioredoxin]-disulfide + H2O = a ribonucleoside 5'-diphosphate + [thioredoxin]-dithiol</text>
        <dbReference type="Rhea" id="RHEA:23252"/>
        <dbReference type="Rhea" id="RHEA-COMP:10698"/>
        <dbReference type="Rhea" id="RHEA-COMP:10700"/>
        <dbReference type="ChEBI" id="CHEBI:15377"/>
        <dbReference type="ChEBI" id="CHEBI:29950"/>
        <dbReference type="ChEBI" id="CHEBI:50058"/>
        <dbReference type="ChEBI" id="CHEBI:57930"/>
        <dbReference type="ChEBI" id="CHEBI:73316"/>
        <dbReference type="EC" id="1.17.4.1"/>
    </reaction>
</comment>
<comment type="activity regulation">
    <text evidence="1">Under complex allosteric control mediated by deoxynucleoside triphosphates and ATP binding. The type of nucleotide bound at the specificity site determines substrate preference. It seems probable that ATP makes the enzyme reduce CDP and UDP, dGTP favors ADP reduction and dTTP favors GDP reduction (By similarity).</text>
</comment>
<comment type="subunit">
    <text evidence="1">Tetramer of two alpha and two beta subunits.</text>
</comment>
<comment type="similarity">
    <text evidence="2">Belongs to the ribonucleoside diphosphate reductase large chain family.</text>
</comment>
<comment type="sequence caution" evidence="2">
    <conflict type="erroneous initiation">
        <sequence resource="EMBL-CDS" id="CAC30687"/>
    </conflict>
    <text>Truncated N-terminus.</text>
</comment>
<protein>
    <recommendedName>
        <fullName>Ribonucleoside-diphosphate reductase subunit alpha</fullName>
        <ecNumber>1.17.4.1</ecNumber>
    </recommendedName>
    <alternativeName>
        <fullName>Ribonucleotide reductase R1 subunit</fullName>
    </alternativeName>
</protein>
<sequence>MPPTATAEPVTASTHMLSNETDYHALNAMLNLYDADGKIQFDKDVLAARQFFLQHVNQNTVFFHNQDEKLDYLIRENYYEREVLDQYSRNFVKSLLDRAYAKKFRFSTFLGAFKYYTSYTLKTFDGKRYLERLEDRVCMVALTLAAGDTGLAEKLVDEIIDGRFQPATPTFLNSGKKQRGEPVSCFLLRIEDNMESIGRSVNSALQLSKRGGGVALLLSNIREHGAPIKNIEHQSSGVIPIMKLLEDAFSYANQLGARQGAGAVYLHAHHPDIYRFLDTKRENADEKIRIKTLSLGVIIPDITFELAKRNEDMYLFSSYDVERVYEVPFADISVTEKYYEMLDDARIRKTKIKAREFFQKLAELQFESGYPYVMFEDTVNRANPIEGKITHSNLCSEILQVSTPSLFNDDLSYAKVGKDISCNLGSLNIAKTMDSPDFAQTVEVAIRALTAVSDQTHIKSVPSIEQGNNDSHAIGLGQMNLHGYLSREGIFYGSEEGVDFTNIYFYTVLFHVLLASNSIAIERGTFFKGFERSKYASGEFFDKYIEQTWEPKTDKVRQLFAEAAIRIPTQNDWKRLKELVVAHGIYNQNLQAVPPTGSISYINHSTSSIHPIVSKVEIRKEGKIGRVYYPAPYMTNDNLQYYQDAYEIGYQKIIDTYAAATQHVDQGLSLTLFFKDTATTRDVNKAQIYAWRKGIKTLYYIRLRQMALEGTEVEGCVSCTL</sequence>
<proteinExistence type="inferred from homology"/>
<reference key="1">
    <citation type="journal article" date="2001" name="Nature">
        <title>Massive gene decay in the leprosy bacillus.</title>
        <authorList>
            <person name="Cole S.T."/>
            <person name="Eiglmeier K."/>
            <person name="Parkhill J."/>
            <person name="James K.D."/>
            <person name="Thomson N.R."/>
            <person name="Wheeler P.R."/>
            <person name="Honore N."/>
            <person name="Garnier T."/>
            <person name="Churcher C.M."/>
            <person name="Harris D.E."/>
            <person name="Mungall K.L."/>
            <person name="Basham D."/>
            <person name="Brown D."/>
            <person name="Chillingworth T."/>
            <person name="Connor R."/>
            <person name="Davies R.M."/>
            <person name="Devlin K."/>
            <person name="Duthoy S."/>
            <person name="Feltwell T."/>
            <person name="Fraser A."/>
            <person name="Hamlin N."/>
            <person name="Holroyd S."/>
            <person name="Hornsby T."/>
            <person name="Jagels K."/>
            <person name="Lacroix C."/>
            <person name="Maclean J."/>
            <person name="Moule S."/>
            <person name="Murphy L.D."/>
            <person name="Oliver K."/>
            <person name="Quail M.A."/>
            <person name="Rajandream M.A."/>
            <person name="Rutherford K.M."/>
            <person name="Rutter S."/>
            <person name="Seeger K."/>
            <person name="Simon S."/>
            <person name="Simmonds M."/>
            <person name="Skelton J."/>
            <person name="Squares R."/>
            <person name="Squares S."/>
            <person name="Stevens K."/>
            <person name="Taylor K."/>
            <person name="Whitehead S."/>
            <person name="Woodward J.R."/>
            <person name="Barrell B.G."/>
        </authorList>
    </citation>
    <scope>NUCLEOTIDE SEQUENCE [LARGE SCALE GENOMIC DNA]</scope>
    <source>
        <strain>TN</strain>
    </source>
</reference>
<accession>Q9CBQ0</accession>
<gene>
    <name type="primary">nrdE</name>
    <name type="ordered locus">ML1734</name>
</gene>
<organism>
    <name type="scientific">Mycobacterium leprae (strain TN)</name>
    <dbReference type="NCBI Taxonomy" id="272631"/>
    <lineage>
        <taxon>Bacteria</taxon>
        <taxon>Bacillati</taxon>
        <taxon>Actinomycetota</taxon>
        <taxon>Actinomycetes</taxon>
        <taxon>Mycobacteriales</taxon>
        <taxon>Mycobacteriaceae</taxon>
        <taxon>Mycobacterium</taxon>
    </lineage>
</organism>
<dbReference type="EC" id="1.17.4.1"/>
<dbReference type="EMBL" id="AL583923">
    <property type="protein sequence ID" value="CAC30687.1"/>
    <property type="status" value="ALT_INIT"/>
    <property type="molecule type" value="Genomic_DNA"/>
</dbReference>
<dbReference type="PIR" id="H87125">
    <property type="entry name" value="H87125"/>
</dbReference>
<dbReference type="RefSeq" id="WP_041322943.1">
    <property type="nucleotide sequence ID" value="NC_002677.1"/>
</dbReference>
<dbReference type="SMR" id="Q9CBQ0"/>
<dbReference type="STRING" id="272631.gene:17575579"/>
<dbReference type="KEGG" id="mle:ML1734"/>
<dbReference type="Leproma" id="ML1734"/>
<dbReference type="eggNOG" id="COG0209">
    <property type="taxonomic scope" value="Bacteria"/>
</dbReference>
<dbReference type="HOGENOM" id="CLU_000404_4_1_11"/>
<dbReference type="Proteomes" id="UP000000806">
    <property type="component" value="Chromosome"/>
</dbReference>
<dbReference type="GO" id="GO:0005971">
    <property type="term" value="C:ribonucleoside-diphosphate reductase complex"/>
    <property type="evidence" value="ECO:0007669"/>
    <property type="project" value="TreeGrafter"/>
</dbReference>
<dbReference type="GO" id="GO:0005524">
    <property type="term" value="F:ATP binding"/>
    <property type="evidence" value="ECO:0007669"/>
    <property type="project" value="UniProtKB-KW"/>
</dbReference>
<dbReference type="GO" id="GO:0004748">
    <property type="term" value="F:ribonucleoside-diphosphate reductase activity, thioredoxin disulfide as acceptor"/>
    <property type="evidence" value="ECO:0007669"/>
    <property type="project" value="UniProtKB-EC"/>
</dbReference>
<dbReference type="GO" id="GO:0009263">
    <property type="term" value="P:deoxyribonucleotide biosynthetic process"/>
    <property type="evidence" value="ECO:0007669"/>
    <property type="project" value="UniProtKB-KW"/>
</dbReference>
<dbReference type="CDD" id="cd01679">
    <property type="entry name" value="RNR_I"/>
    <property type="match status" value="1"/>
</dbReference>
<dbReference type="FunFam" id="1.10.1650.20:FF:000002">
    <property type="entry name" value="Ribonucleoside-diphosphate reductase"/>
    <property type="match status" value="1"/>
</dbReference>
<dbReference type="Gene3D" id="1.10.1650.20">
    <property type="match status" value="1"/>
</dbReference>
<dbReference type="Gene3D" id="3.20.70.20">
    <property type="match status" value="1"/>
</dbReference>
<dbReference type="InterPro" id="IPR013346">
    <property type="entry name" value="NrdE_NrdA_C"/>
</dbReference>
<dbReference type="InterPro" id="IPR026459">
    <property type="entry name" value="RNR_1b_NrdE"/>
</dbReference>
<dbReference type="InterPro" id="IPR000788">
    <property type="entry name" value="RNR_lg_C"/>
</dbReference>
<dbReference type="InterPro" id="IPR013509">
    <property type="entry name" value="RNR_lsu_N"/>
</dbReference>
<dbReference type="InterPro" id="IPR013554">
    <property type="entry name" value="RNR_N"/>
</dbReference>
<dbReference type="InterPro" id="IPR008926">
    <property type="entry name" value="RNR_R1-su_N"/>
</dbReference>
<dbReference type="InterPro" id="IPR039718">
    <property type="entry name" value="Rrm1"/>
</dbReference>
<dbReference type="NCBIfam" id="TIGR02506">
    <property type="entry name" value="NrdE_NrdA"/>
    <property type="match status" value="1"/>
</dbReference>
<dbReference type="NCBIfam" id="TIGR04170">
    <property type="entry name" value="RNR_1b_NrdE"/>
    <property type="match status" value="1"/>
</dbReference>
<dbReference type="PANTHER" id="PTHR11573:SF30">
    <property type="entry name" value="RIBONUCLEOSIDE-DIPHOSPHATE REDUCTASE 2 SUBUNIT ALPHA"/>
    <property type="match status" value="1"/>
</dbReference>
<dbReference type="PANTHER" id="PTHR11573">
    <property type="entry name" value="RIBONUCLEOSIDE-DIPHOSPHATE REDUCTASE LARGE CHAIN"/>
    <property type="match status" value="1"/>
</dbReference>
<dbReference type="Pfam" id="PF02867">
    <property type="entry name" value="Ribonuc_red_lgC"/>
    <property type="match status" value="1"/>
</dbReference>
<dbReference type="Pfam" id="PF00317">
    <property type="entry name" value="Ribonuc_red_lgN"/>
    <property type="match status" value="1"/>
</dbReference>
<dbReference type="Pfam" id="PF08343">
    <property type="entry name" value="RNR_N"/>
    <property type="match status" value="1"/>
</dbReference>
<dbReference type="PRINTS" id="PR01183">
    <property type="entry name" value="RIBORDTASEM1"/>
</dbReference>
<dbReference type="SUPFAM" id="SSF51998">
    <property type="entry name" value="PFL-like glycyl radical enzymes"/>
    <property type="match status" value="1"/>
</dbReference>
<dbReference type="SUPFAM" id="SSF48168">
    <property type="entry name" value="R1 subunit of ribonucleotide reductase, N-terminal domain"/>
    <property type="match status" value="1"/>
</dbReference>
<dbReference type="PROSITE" id="PS00089">
    <property type="entry name" value="RIBORED_LARGE"/>
    <property type="match status" value="1"/>
</dbReference>
<evidence type="ECO:0000250" key="1"/>
<evidence type="ECO:0000305" key="2"/>